<comment type="function">
    <text evidence="1">Involved in the biosynthesis of branched-chain amino acids (BCAA). Catalyzes an alkyl-migration followed by a ketol-acid reduction of (S)-2-acetolactate (S2AL) to yield (R)-2,3-dihydroxy-isovalerate. In the isomerase reaction, S2AL is rearranged via a Mg-dependent methyl migration to produce 3-hydroxy-3-methyl-2-ketobutyrate (HMKB). In the reductase reaction, this 2-ketoacid undergoes a metal-dependent reduction by NADPH to yield (R)-2,3-dihydroxy-isovalerate.</text>
</comment>
<comment type="catalytic activity">
    <reaction evidence="1">
        <text>(2R)-2,3-dihydroxy-3-methylbutanoate + NADP(+) = (2S)-2-acetolactate + NADPH + H(+)</text>
        <dbReference type="Rhea" id="RHEA:22068"/>
        <dbReference type="ChEBI" id="CHEBI:15378"/>
        <dbReference type="ChEBI" id="CHEBI:49072"/>
        <dbReference type="ChEBI" id="CHEBI:57783"/>
        <dbReference type="ChEBI" id="CHEBI:58349"/>
        <dbReference type="ChEBI" id="CHEBI:58476"/>
        <dbReference type="EC" id="1.1.1.86"/>
    </reaction>
</comment>
<comment type="catalytic activity">
    <reaction evidence="1">
        <text>(2R,3R)-2,3-dihydroxy-3-methylpentanoate + NADP(+) = (S)-2-ethyl-2-hydroxy-3-oxobutanoate + NADPH + H(+)</text>
        <dbReference type="Rhea" id="RHEA:13493"/>
        <dbReference type="ChEBI" id="CHEBI:15378"/>
        <dbReference type="ChEBI" id="CHEBI:49256"/>
        <dbReference type="ChEBI" id="CHEBI:49258"/>
        <dbReference type="ChEBI" id="CHEBI:57783"/>
        <dbReference type="ChEBI" id="CHEBI:58349"/>
        <dbReference type="EC" id="1.1.1.86"/>
    </reaction>
</comment>
<comment type="cofactor">
    <cofactor evidence="1">
        <name>Mg(2+)</name>
        <dbReference type="ChEBI" id="CHEBI:18420"/>
    </cofactor>
    <text evidence="1">Binds 2 magnesium ions per subunit.</text>
</comment>
<comment type="pathway">
    <text evidence="1">Amino-acid biosynthesis; L-isoleucine biosynthesis; L-isoleucine from 2-oxobutanoate: step 2/4.</text>
</comment>
<comment type="pathway">
    <text evidence="1">Amino-acid biosynthesis; L-valine biosynthesis; L-valine from pyruvate: step 2/4.</text>
</comment>
<comment type="similarity">
    <text evidence="1">Belongs to the ketol-acid reductoisomerase family.</text>
</comment>
<accession>A8ACS4</accession>
<organism>
    <name type="scientific">Citrobacter koseri (strain ATCC BAA-895 / CDC 4225-83 / SGSC4696)</name>
    <dbReference type="NCBI Taxonomy" id="290338"/>
    <lineage>
        <taxon>Bacteria</taxon>
        <taxon>Pseudomonadati</taxon>
        <taxon>Pseudomonadota</taxon>
        <taxon>Gammaproteobacteria</taxon>
        <taxon>Enterobacterales</taxon>
        <taxon>Enterobacteriaceae</taxon>
        <taxon>Citrobacter</taxon>
    </lineage>
</organism>
<protein>
    <recommendedName>
        <fullName evidence="1">Ketol-acid reductoisomerase (NADP(+))</fullName>
        <shortName evidence="1">KARI</shortName>
        <ecNumber evidence="1">1.1.1.86</ecNumber>
    </recommendedName>
    <alternativeName>
        <fullName evidence="1">Acetohydroxy-acid isomeroreductase</fullName>
        <shortName evidence="1">AHIR</shortName>
    </alternativeName>
    <alternativeName>
        <fullName evidence="1">Alpha-keto-beta-hydroxylacyl reductoisomerase</fullName>
    </alternativeName>
    <alternativeName>
        <fullName evidence="1">Ketol-acid reductoisomerase type 2</fullName>
    </alternativeName>
    <alternativeName>
        <fullName evidence="1">Ketol-acid reductoisomerase type II</fullName>
    </alternativeName>
</protein>
<name>ILVC_CITK8</name>
<keyword id="KW-0028">Amino-acid biosynthesis</keyword>
<keyword id="KW-0100">Branched-chain amino acid biosynthesis</keyword>
<keyword id="KW-0460">Magnesium</keyword>
<keyword id="KW-0479">Metal-binding</keyword>
<keyword id="KW-0521">NADP</keyword>
<keyword id="KW-0560">Oxidoreductase</keyword>
<keyword id="KW-1185">Reference proteome</keyword>
<keyword id="KW-0677">Repeat</keyword>
<feature type="chain" id="PRO_1000050500" description="Ketol-acid reductoisomerase (NADP(+))">
    <location>
        <begin position="1"/>
        <end position="491"/>
    </location>
</feature>
<feature type="domain" description="KARI N-terminal Rossmann" evidence="2">
    <location>
        <begin position="15"/>
        <end position="208"/>
    </location>
</feature>
<feature type="domain" description="KARI C-terminal knotted 1" evidence="3">
    <location>
        <begin position="209"/>
        <end position="344"/>
    </location>
</feature>
<feature type="domain" description="KARI C-terminal knotted 2" evidence="3">
    <location>
        <begin position="345"/>
        <end position="484"/>
    </location>
</feature>
<feature type="active site" evidence="1">
    <location>
        <position position="132"/>
    </location>
</feature>
<feature type="binding site" evidence="1">
    <location>
        <begin position="45"/>
        <end position="48"/>
    </location>
    <ligand>
        <name>NADP(+)</name>
        <dbReference type="ChEBI" id="CHEBI:58349"/>
    </ligand>
</feature>
<feature type="binding site" evidence="1">
    <location>
        <position position="68"/>
    </location>
    <ligand>
        <name>NADP(+)</name>
        <dbReference type="ChEBI" id="CHEBI:58349"/>
    </ligand>
</feature>
<feature type="binding site" evidence="1">
    <location>
        <position position="76"/>
    </location>
    <ligand>
        <name>NADP(+)</name>
        <dbReference type="ChEBI" id="CHEBI:58349"/>
    </ligand>
</feature>
<feature type="binding site" evidence="1">
    <location>
        <position position="78"/>
    </location>
    <ligand>
        <name>NADP(+)</name>
        <dbReference type="ChEBI" id="CHEBI:58349"/>
    </ligand>
</feature>
<feature type="binding site" evidence="1">
    <location>
        <begin position="108"/>
        <end position="110"/>
    </location>
    <ligand>
        <name>NADP(+)</name>
        <dbReference type="ChEBI" id="CHEBI:58349"/>
    </ligand>
</feature>
<feature type="binding site" evidence="1">
    <location>
        <position position="158"/>
    </location>
    <ligand>
        <name>NADP(+)</name>
        <dbReference type="ChEBI" id="CHEBI:58349"/>
    </ligand>
</feature>
<feature type="binding site" evidence="1">
    <location>
        <position position="217"/>
    </location>
    <ligand>
        <name>Mg(2+)</name>
        <dbReference type="ChEBI" id="CHEBI:18420"/>
        <label>1</label>
    </ligand>
</feature>
<feature type="binding site" evidence="1">
    <location>
        <position position="217"/>
    </location>
    <ligand>
        <name>Mg(2+)</name>
        <dbReference type="ChEBI" id="CHEBI:18420"/>
        <label>2</label>
    </ligand>
</feature>
<feature type="binding site" evidence="1">
    <location>
        <position position="221"/>
    </location>
    <ligand>
        <name>Mg(2+)</name>
        <dbReference type="ChEBI" id="CHEBI:18420"/>
        <label>1</label>
    </ligand>
</feature>
<feature type="binding site" evidence="1">
    <location>
        <position position="389"/>
    </location>
    <ligand>
        <name>Mg(2+)</name>
        <dbReference type="ChEBI" id="CHEBI:18420"/>
        <label>2</label>
    </ligand>
</feature>
<feature type="binding site" evidence="1">
    <location>
        <position position="393"/>
    </location>
    <ligand>
        <name>Mg(2+)</name>
        <dbReference type="ChEBI" id="CHEBI:18420"/>
        <label>2</label>
    </ligand>
</feature>
<feature type="binding site" evidence="1">
    <location>
        <position position="414"/>
    </location>
    <ligand>
        <name>substrate</name>
    </ligand>
</feature>
<evidence type="ECO:0000255" key="1">
    <source>
        <dbReference type="HAMAP-Rule" id="MF_00435"/>
    </source>
</evidence>
<evidence type="ECO:0000255" key="2">
    <source>
        <dbReference type="PROSITE-ProRule" id="PRU01197"/>
    </source>
</evidence>
<evidence type="ECO:0000255" key="3">
    <source>
        <dbReference type="PROSITE-ProRule" id="PRU01198"/>
    </source>
</evidence>
<dbReference type="EC" id="1.1.1.86" evidence="1"/>
<dbReference type="EMBL" id="CP000822">
    <property type="protein sequence ID" value="ABV11287.1"/>
    <property type="molecule type" value="Genomic_DNA"/>
</dbReference>
<dbReference type="RefSeq" id="WP_012131124.1">
    <property type="nucleotide sequence ID" value="NC_009792.1"/>
</dbReference>
<dbReference type="SMR" id="A8ACS4"/>
<dbReference type="STRING" id="290338.CKO_00113"/>
<dbReference type="GeneID" id="45134413"/>
<dbReference type="KEGG" id="cko:CKO_00113"/>
<dbReference type="HOGENOM" id="CLU_551905_0_0_6"/>
<dbReference type="OrthoDB" id="9804088at2"/>
<dbReference type="UniPathway" id="UPA00047">
    <property type="reaction ID" value="UER00056"/>
</dbReference>
<dbReference type="UniPathway" id="UPA00049">
    <property type="reaction ID" value="UER00060"/>
</dbReference>
<dbReference type="Proteomes" id="UP000008148">
    <property type="component" value="Chromosome"/>
</dbReference>
<dbReference type="GO" id="GO:0005829">
    <property type="term" value="C:cytosol"/>
    <property type="evidence" value="ECO:0007669"/>
    <property type="project" value="TreeGrafter"/>
</dbReference>
<dbReference type="GO" id="GO:0004455">
    <property type="term" value="F:ketol-acid reductoisomerase activity"/>
    <property type="evidence" value="ECO:0007669"/>
    <property type="project" value="UniProtKB-UniRule"/>
</dbReference>
<dbReference type="GO" id="GO:0000287">
    <property type="term" value="F:magnesium ion binding"/>
    <property type="evidence" value="ECO:0007669"/>
    <property type="project" value="UniProtKB-UniRule"/>
</dbReference>
<dbReference type="GO" id="GO:0009097">
    <property type="term" value="P:isoleucine biosynthetic process"/>
    <property type="evidence" value="ECO:0007669"/>
    <property type="project" value="UniProtKB-UniRule"/>
</dbReference>
<dbReference type="GO" id="GO:0009099">
    <property type="term" value="P:L-valine biosynthetic process"/>
    <property type="evidence" value="ECO:0007669"/>
    <property type="project" value="UniProtKB-UniRule"/>
</dbReference>
<dbReference type="FunFam" id="1.10.1040.10:FF:000007">
    <property type="entry name" value="Ketol-acid reductoisomerase (NADP(+))"/>
    <property type="match status" value="1"/>
</dbReference>
<dbReference type="FunFam" id="3.40.50.720:FF:000043">
    <property type="entry name" value="Ketol-acid reductoisomerase (NADP(+))"/>
    <property type="match status" value="1"/>
</dbReference>
<dbReference type="Gene3D" id="1.10.1040.10">
    <property type="entry name" value="N-(1-d-carboxylethyl)-l-norvaline Dehydrogenase, domain 2"/>
    <property type="match status" value="1"/>
</dbReference>
<dbReference type="Gene3D" id="3.40.50.720">
    <property type="entry name" value="NAD(P)-binding Rossmann-like Domain"/>
    <property type="match status" value="1"/>
</dbReference>
<dbReference type="HAMAP" id="MF_00435">
    <property type="entry name" value="IlvC"/>
    <property type="match status" value="1"/>
</dbReference>
<dbReference type="InterPro" id="IPR008927">
    <property type="entry name" value="6-PGluconate_DH-like_C_sf"/>
</dbReference>
<dbReference type="InterPro" id="IPR013328">
    <property type="entry name" value="6PGD_dom2"/>
</dbReference>
<dbReference type="InterPro" id="IPR013023">
    <property type="entry name" value="KARI"/>
</dbReference>
<dbReference type="InterPro" id="IPR000506">
    <property type="entry name" value="KARI_C"/>
</dbReference>
<dbReference type="InterPro" id="IPR013116">
    <property type="entry name" value="KARI_N"/>
</dbReference>
<dbReference type="InterPro" id="IPR036291">
    <property type="entry name" value="NAD(P)-bd_dom_sf"/>
</dbReference>
<dbReference type="NCBIfam" id="TIGR00465">
    <property type="entry name" value="ilvC"/>
    <property type="match status" value="1"/>
</dbReference>
<dbReference type="NCBIfam" id="NF003557">
    <property type="entry name" value="PRK05225.1"/>
    <property type="match status" value="1"/>
</dbReference>
<dbReference type="PANTHER" id="PTHR21371">
    <property type="entry name" value="KETOL-ACID REDUCTOISOMERASE, MITOCHONDRIAL"/>
    <property type="match status" value="1"/>
</dbReference>
<dbReference type="PANTHER" id="PTHR21371:SF1">
    <property type="entry name" value="KETOL-ACID REDUCTOISOMERASE, MITOCHONDRIAL"/>
    <property type="match status" value="1"/>
</dbReference>
<dbReference type="Pfam" id="PF01450">
    <property type="entry name" value="KARI_C"/>
    <property type="match status" value="2"/>
</dbReference>
<dbReference type="Pfam" id="PF07991">
    <property type="entry name" value="KARI_N"/>
    <property type="match status" value="1"/>
</dbReference>
<dbReference type="SUPFAM" id="SSF48179">
    <property type="entry name" value="6-phosphogluconate dehydrogenase C-terminal domain-like"/>
    <property type="match status" value="2"/>
</dbReference>
<dbReference type="SUPFAM" id="SSF51735">
    <property type="entry name" value="NAD(P)-binding Rossmann-fold domains"/>
    <property type="match status" value="1"/>
</dbReference>
<dbReference type="PROSITE" id="PS51851">
    <property type="entry name" value="KARI_C"/>
    <property type="match status" value="2"/>
</dbReference>
<dbReference type="PROSITE" id="PS51850">
    <property type="entry name" value="KARI_N"/>
    <property type="match status" value="1"/>
</dbReference>
<proteinExistence type="inferred from homology"/>
<gene>
    <name evidence="1" type="primary">ilvC</name>
    <name type="ordered locus">CKO_00113</name>
</gene>
<sequence>MANYFNTLNLRQQLAQLGKCRFMGRDEFADGASYLQGKKVVIVGCGAQGLNQGLNMRDSGLDIAYALRKEAIAEKRASWRKATENGFKVGTYEELIPQADLVVNLTPDKQHSDVVRSVQPLMKDGAALGYSHGFNIVEVGEQIRKDITVVMVAPKCPGTEVREEYKRGFGVPTLIAVHPENDPKGEGMAIAKAWAAATGGHRAGVLESSFVAEVKSDLMGEQTILCGMLQAGSLLCFDKLVEEGTDPAYAEKLIQYGWETITEALKQGGITLMMDRLSNPAKLRAYALSEQLKTIMAPLFQKHMDDIISGEFSSGMMADWANDDKKLLTWREETGKTAFETAPQYEGKIGEQEYFDKGVLMIAMVKAGVELAFETMVDSGIIEESAYYESLHELPLIANTIARKRLYEMNVVISDTAEYGNYLFSYACVPLLKAFMTEIQPGDLGKAIAEGAVDNAQLRDVNEAIRGHAIEKVGQKLRGYMTDMKRIAVAG</sequence>
<reference key="1">
    <citation type="submission" date="2007-08" db="EMBL/GenBank/DDBJ databases">
        <authorList>
            <consortium name="The Citrobacter koseri Genome Sequencing Project"/>
            <person name="McClelland M."/>
            <person name="Sanderson E.K."/>
            <person name="Porwollik S."/>
            <person name="Spieth J."/>
            <person name="Clifton W.S."/>
            <person name="Latreille P."/>
            <person name="Courtney L."/>
            <person name="Wang C."/>
            <person name="Pepin K."/>
            <person name="Bhonagiri V."/>
            <person name="Nash W."/>
            <person name="Johnson M."/>
            <person name="Thiruvilangam P."/>
            <person name="Wilson R."/>
        </authorList>
    </citation>
    <scope>NUCLEOTIDE SEQUENCE [LARGE SCALE GENOMIC DNA]</scope>
    <source>
        <strain>ATCC BAA-895 / CDC 4225-83 / SGSC4696</strain>
    </source>
</reference>